<dbReference type="EC" id="2.1.1.-" evidence="12"/>
<dbReference type="EMBL" id="AK002212">
    <property type="protein sequence ID" value="BAA92136.1"/>
    <property type="molecule type" value="mRNA"/>
</dbReference>
<dbReference type="EMBL" id="AK302775">
    <property type="protein sequence ID" value="BAG63980.1"/>
    <property type="molecule type" value="mRNA"/>
</dbReference>
<dbReference type="EMBL" id="AC010655">
    <property type="status" value="NOT_ANNOTATED_CDS"/>
    <property type="molecule type" value="Genomic_DNA"/>
</dbReference>
<dbReference type="EMBL" id="AC090114">
    <property type="status" value="NOT_ANNOTATED_CDS"/>
    <property type="molecule type" value="Genomic_DNA"/>
</dbReference>
<dbReference type="EMBL" id="BC064929">
    <property type="protein sequence ID" value="AAH64929.1"/>
    <property type="molecule type" value="mRNA"/>
</dbReference>
<dbReference type="EMBL" id="BC107586">
    <property type="protein sequence ID" value="AAI07587.1"/>
    <property type="molecule type" value="mRNA"/>
</dbReference>
<dbReference type="EMBL" id="BC121115">
    <property type="protein sequence ID" value="AAI21116.1"/>
    <property type="molecule type" value="mRNA"/>
</dbReference>
<dbReference type="EMBL" id="BC121116">
    <property type="protein sequence ID" value="AAI21117.1"/>
    <property type="molecule type" value="mRNA"/>
</dbReference>
<dbReference type="CCDS" id="CCDS5803.2">
    <molecule id="Q6P1Q9-1"/>
</dbReference>
<dbReference type="RefSeq" id="NP_060866.2">
    <molecule id="Q6P1Q9-1"/>
    <property type="nucleotide sequence ID" value="NM_018396.3"/>
</dbReference>
<dbReference type="SMR" id="Q6P1Q9"/>
<dbReference type="BioGRID" id="120910">
    <property type="interactions" value="24"/>
</dbReference>
<dbReference type="FunCoup" id="Q6P1Q9">
    <property type="interactions" value="2212"/>
</dbReference>
<dbReference type="IntAct" id="Q6P1Q9">
    <property type="interactions" value="10"/>
</dbReference>
<dbReference type="STRING" id="9606.ENSP00000262432"/>
<dbReference type="GlyGen" id="Q6P1Q9">
    <property type="glycosylation" value="1 site, 1 O-linked glycan (1 site)"/>
</dbReference>
<dbReference type="iPTMnet" id="Q6P1Q9"/>
<dbReference type="PhosphoSitePlus" id="Q6P1Q9"/>
<dbReference type="BioMuta" id="METTL2B"/>
<dbReference type="DMDM" id="317373413"/>
<dbReference type="jPOST" id="Q6P1Q9"/>
<dbReference type="MassIVE" id="Q6P1Q9"/>
<dbReference type="PaxDb" id="9606-ENSP00000262432"/>
<dbReference type="PeptideAtlas" id="Q6P1Q9"/>
<dbReference type="ProteomicsDB" id="66867">
    <molecule id="Q6P1Q9-1"/>
</dbReference>
<dbReference type="ProteomicsDB" id="66868">
    <molecule id="Q6P1Q9-2"/>
</dbReference>
<dbReference type="Pumba" id="Q6P1Q9"/>
<dbReference type="Antibodypedia" id="31876">
    <property type="antibodies" value="132 antibodies from 22 providers"/>
</dbReference>
<dbReference type="DNASU" id="55798"/>
<dbReference type="Ensembl" id="ENST00000262432.13">
    <molecule id="Q6P1Q9-1"/>
    <property type="protein sequence ID" value="ENSP00000262432.9"/>
    <property type="gene ID" value="ENSG00000165055.16"/>
</dbReference>
<dbReference type="Ensembl" id="ENST00000480046.5">
    <molecule id="Q6P1Q9-2"/>
    <property type="protein sequence ID" value="ENSP00000418402.1"/>
    <property type="gene ID" value="ENSG00000165055.16"/>
</dbReference>
<dbReference type="GeneID" id="55798"/>
<dbReference type="KEGG" id="hsa:55798"/>
<dbReference type="MANE-Select" id="ENST00000262432.13">
    <property type="protein sequence ID" value="ENSP00000262432.9"/>
    <property type="RefSeq nucleotide sequence ID" value="NM_018396.3"/>
    <property type="RefSeq protein sequence ID" value="NP_060866.2"/>
</dbReference>
<dbReference type="UCSC" id="uc003vnf.3">
    <molecule id="Q6P1Q9-1"/>
    <property type="organism name" value="human"/>
</dbReference>
<dbReference type="AGR" id="HGNC:18272"/>
<dbReference type="CTD" id="55798"/>
<dbReference type="DisGeNET" id="55798"/>
<dbReference type="GeneCards" id="METTL2B"/>
<dbReference type="HGNC" id="HGNC:18272">
    <property type="gene designation" value="METTL2B"/>
</dbReference>
<dbReference type="HPA" id="ENSG00000165055">
    <property type="expression patterns" value="Low tissue specificity"/>
</dbReference>
<dbReference type="MIM" id="607846">
    <property type="type" value="gene"/>
</dbReference>
<dbReference type="neXtProt" id="NX_Q6P1Q9"/>
<dbReference type="PharmGKB" id="PA134924546"/>
<dbReference type="VEuPathDB" id="HostDB:ENSG00000165055"/>
<dbReference type="eggNOG" id="KOG2361">
    <property type="taxonomic scope" value="Eukaryota"/>
</dbReference>
<dbReference type="GeneTree" id="ENSGT00940000156059"/>
<dbReference type="HOGENOM" id="CLU_029724_0_1_1"/>
<dbReference type="InParanoid" id="Q6P1Q9"/>
<dbReference type="OMA" id="KHNACKT"/>
<dbReference type="OrthoDB" id="417697at2759"/>
<dbReference type="PAN-GO" id="Q6P1Q9">
    <property type="GO annotations" value="1 GO annotation based on evolutionary models"/>
</dbReference>
<dbReference type="PhylomeDB" id="Q6P1Q9"/>
<dbReference type="TreeFam" id="TF323232"/>
<dbReference type="BRENDA" id="2.1.1.268">
    <property type="organism ID" value="2681"/>
</dbReference>
<dbReference type="BRENDA" id="2.1.1.B109">
    <property type="organism ID" value="2681"/>
</dbReference>
<dbReference type="PathwayCommons" id="Q6P1Q9"/>
<dbReference type="SignaLink" id="Q6P1Q9"/>
<dbReference type="BioGRID-ORCS" id="55798">
    <property type="hits" value="40 hits in 724 CRISPR screens"/>
</dbReference>
<dbReference type="CD-CODE" id="DEE660B4">
    <property type="entry name" value="Stress granule"/>
</dbReference>
<dbReference type="ChiTaRS" id="METTL2B">
    <property type="organism name" value="human"/>
</dbReference>
<dbReference type="GeneWiki" id="METTL2B"/>
<dbReference type="GenomeRNAi" id="55798"/>
<dbReference type="Pharos" id="Q6P1Q9">
    <property type="development level" value="Tbio"/>
</dbReference>
<dbReference type="PRO" id="PR:Q6P1Q9"/>
<dbReference type="Proteomes" id="UP000005640">
    <property type="component" value="Chromosome 7"/>
</dbReference>
<dbReference type="RNAct" id="Q6P1Q9">
    <property type="molecule type" value="protein"/>
</dbReference>
<dbReference type="Bgee" id="ENSG00000165055">
    <property type="expression patterns" value="Expressed in colonic epithelium and 108 other cell types or tissues"/>
</dbReference>
<dbReference type="ExpressionAtlas" id="Q6P1Q9">
    <property type="expression patterns" value="baseline and differential"/>
</dbReference>
<dbReference type="GO" id="GO:0005737">
    <property type="term" value="C:cytoplasm"/>
    <property type="evidence" value="ECO:0000314"/>
    <property type="project" value="UniProtKB"/>
</dbReference>
<dbReference type="GO" id="GO:0016427">
    <property type="term" value="F:tRNA (cytidine) methyltransferase activity"/>
    <property type="evidence" value="ECO:0000315"/>
    <property type="project" value="UniProtKB"/>
</dbReference>
<dbReference type="GO" id="GO:0052735">
    <property type="term" value="F:tRNA (cytidine-3-)-methyltransferase activity"/>
    <property type="evidence" value="ECO:0000315"/>
    <property type="project" value="UniProtKB"/>
</dbReference>
<dbReference type="GO" id="GO:0006399">
    <property type="term" value="P:tRNA metabolic process"/>
    <property type="evidence" value="ECO:0000315"/>
    <property type="project" value="UniProtKB"/>
</dbReference>
<dbReference type="GO" id="GO:0030488">
    <property type="term" value="P:tRNA methylation"/>
    <property type="evidence" value="ECO:0000315"/>
    <property type="project" value="UniProtKB"/>
</dbReference>
<dbReference type="CDD" id="cd02440">
    <property type="entry name" value="AdoMet_MTases"/>
    <property type="match status" value="1"/>
</dbReference>
<dbReference type="Gene3D" id="3.40.50.150">
    <property type="entry name" value="Vaccinia Virus protein VP39"/>
    <property type="match status" value="1"/>
</dbReference>
<dbReference type="InterPro" id="IPR013217">
    <property type="entry name" value="Methyltransf_12"/>
</dbReference>
<dbReference type="InterPro" id="IPR026113">
    <property type="entry name" value="METTL2/6/8-like"/>
</dbReference>
<dbReference type="InterPro" id="IPR029063">
    <property type="entry name" value="SAM-dependent_MTases_sf"/>
</dbReference>
<dbReference type="PANTHER" id="PTHR22809">
    <property type="entry name" value="METHYLTRANSFERASE-RELATED"/>
    <property type="match status" value="1"/>
</dbReference>
<dbReference type="PANTHER" id="PTHR22809:SF4">
    <property type="entry name" value="TRNA N(3)-METHYLCYTIDINE METHYLTRANSFERASE METTL2A-RELATED"/>
    <property type="match status" value="1"/>
</dbReference>
<dbReference type="Pfam" id="PF08242">
    <property type="entry name" value="Methyltransf_12"/>
    <property type="match status" value="1"/>
</dbReference>
<dbReference type="PIRSF" id="PIRSF037755">
    <property type="entry name" value="Mettl2_prd"/>
    <property type="match status" value="1"/>
</dbReference>
<dbReference type="SUPFAM" id="SSF53335">
    <property type="entry name" value="S-adenosyl-L-methionine-dependent methyltransferases"/>
    <property type="match status" value="1"/>
</dbReference>
<organism>
    <name type="scientific">Homo sapiens</name>
    <name type="common">Human</name>
    <dbReference type="NCBI Taxonomy" id="9606"/>
    <lineage>
        <taxon>Eukaryota</taxon>
        <taxon>Metazoa</taxon>
        <taxon>Chordata</taxon>
        <taxon>Craniata</taxon>
        <taxon>Vertebrata</taxon>
        <taxon>Euteleostomi</taxon>
        <taxon>Mammalia</taxon>
        <taxon>Eutheria</taxon>
        <taxon>Euarchontoglires</taxon>
        <taxon>Primates</taxon>
        <taxon>Haplorrhini</taxon>
        <taxon>Catarrhini</taxon>
        <taxon>Hominidae</taxon>
        <taxon>Homo</taxon>
    </lineage>
</organism>
<gene>
    <name evidence="10 13" type="primary">METTL2B</name>
</gene>
<keyword id="KW-0007">Acetylation</keyword>
<keyword id="KW-0025">Alternative splicing</keyword>
<keyword id="KW-0963">Cytoplasm</keyword>
<keyword id="KW-0489">Methyltransferase</keyword>
<keyword id="KW-0597">Phosphoprotein</keyword>
<keyword id="KW-1267">Proteomics identification</keyword>
<keyword id="KW-1185">Reference proteome</keyword>
<keyword id="KW-0949">S-adenosyl-L-methionine</keyword>
<keyword id="KW-0808">Transferase</keyword>
<keyword id="KW-0819">tRNA processing</keyword>
<comment type="function">
    <text evidence="5">S-adenosyl-L-methionine-dependent methyltransferase that mediates N(3)-methylcytidine modification of residue 32 of the tRNA anticodon loop of tRNA(Thr)(UGU) and tRNA(Arg)(CCU).</text>
</comment>
<comment type="catalytic activity">
    <reaction evidence="12">
        <text>cytidine(32) in tRNA(Thr) + S-adenosyl-L-methionine = N(3)-methylcytidine(32) in tRNA(Thr) + S-adenosyl-L-homocysteine + H(+)</text>
        <dbReference type="Rhea" id="RHEA:50960"/>
        <dbReference type="Rhea" id="RHEA-COMP:12850"/>
        <dbReference type="Rhea" id="RHEA-COMP:12852"/>
        <dbReference type="ChEBI" id="CHEBI:15378"/>
        <dbReference type="ChEBI" id="CHEBI:57856"/>
        <dbReference type="ChEBI" id="CHEBI:59789"/>
        <dbReference type="ChEBI" id="CHEBI:74894"/>
        <dbReference type="ChEBI" id="CHEBI:82748"/>
    </reaction>
    <physiologicalReaction direction="left-to-right" evidence="12">
        <dbReference type="Rhea" id="RHEA:50961"/>
    </physiologicalReaction>
</comment>
<comment type="catalytic activity">
    <reaction evidence="12">
        <text>cytidine(32) in tRNA(Arg)(CCU) + S-adenosyl-L-methionine = N(3)-methylcytidine(32) in tRNA(Arg)(CCU) + S-adenosyl-L-homocysteine + H(+)</text>
        <dbReference type="Rhea" id="RHEA:60912"/>
        <dbReference type="Rhea" id="RHEA-COMP:15710"/>
        <dbReference type="Rhea" id="RHEA-COMP:15712"/>
        <dbReference type="ChEBI" id="CHEBI:15378"/>
        <dbReference type="ChEBI" id="CHEBI:57856"/>
        <dbReference type="ChEBI" id="CHEBI:59789"/>
        <dbReference type="ChEBI" id="CHEBI:74894"/>
        <dbReference type="ChEBI" id="CHEBI:82748"/>
    </reaction>
    <physiologicalReaction direction="left-to-right" evidence="12">
        <dbReference type="Rhea" id="RHEA:60913"/>
    </physiologicalReaction>
</comment>
<comment type="subunit">
    <text evidence="2 6">Monomer (By similarity). Interacts with DALRD3 (PubMed:32427860).</text>
</comment>
<comment type="subcellular location">
    <subcellularLocation>
        <location evidence="7">Cytoplasm</location>
    </subcellularLocation>
</comment>
<comment type="alternative products">
    <event type="alternative splicing"/>
    <isoform>
        <id>Q6P1Q9-1</id>
        <name>1</name>
        <sequence type="displayed"/>
    </isoform>
    <isoform>
        <id>Q6P1Q9-2</id>
        <name>2</name>
        <sequence type="described" ref="VSP_032816"/>
    </isoform>
</comment>
<comment type="similarity">
    <text evidence="11">Belongs to the methyltransferase superfamily. METL family.</text>
</comment>
<reference key="1">
    <citation type="journal article" date="2004" name="Nat. Genet.">
        <title>Complete sequencing and characterization of 21,243 full-length human cDNAs.</title>
        <authorList>
            <person name="Ota T."/>
            <person name="Suzuki Y."/>
            <person name="Nishikawa T."/>
            <person name="Otsuki T."/>
            <person name="Sugiyama T."/>
            <person name="Irie R."/>
            <person name="Wakamatsu A."/>
            <person name="Hayashi K."/>
            <person name="Sato H."/>
            <person name="Nagai K."/>
            <person name="Kimura K."/>
            <person name="Makita H."/>
            <person name="Sekine M."/>
            <person name="Obayashi M."/>
            <person name="Nishi T."/>
            <person name="Shibahara T."/>
            <person name="Tanaka T."/>
            <person name="Ishii S."/>
            <person name="Yamamoto J."/>
            <person name="Saito K."/>
            <person name="Kawai Y."/>
            <person name="Isono Y."/>
            <person name="Nakamura Y."/>
            <person name="Nagahari K."/>
            <person name="Murakami K."/>
            <person name="Yasuda T."/>
            <person name="Iwayanagi T."/>
            <person name="Wagatsuma M."/>
            <person name="Shiratori A."/>
            <person name="Sudo H."/>
            <person name="Hosoiri T."/>
            <person name="Kaku Y."/>
            <person name="Kodaira H."/>
            <person name="Kondo H."/>
            <person name="Sugawara M."/>
            <person name="Takahashi M."/>
            <person name="Kanda K."/>
            <person name="Yokoi T."/>
            <person name="Furuya T."/>
            <person name="Kikkawa E."/>
            <person name="Omura Y."/>
            <person name="Abe K."/>
            <person name="Kamihara K."/>
            <person name="Katsuta N."/>
            <person name="Sato K."/>
            <person name="Tanikawa M."/>
            <person name="Yamazaki M."/>
            <person name="Ninomiya K."/>
            <person name="Ishibashi T."/>
            <person name="Yamashita H."/>
            <person name="Murakawa K."/>
            <person name="Fujimori K."/>
            <person name="Tanai H."/>
            <person name="Kimata M."/>
            <person name="Watanabe M."/>
            <person name="Hiraoka S."/>
            <person name="Chiba Y."/>
            <person name="Ishida S."/>
            <person name="Ono Y."/>
            <person name="Takiguchi S."/>
            <person name="Watanabe S."/>
            <person name="Yosida M."/>
            <person name="Hotuta T."/>
            <person name="Kusano J."/>
            <person name="Kanehori K."/>
            <person name="Takahashi-Fujii A."/>
            <person name="Hara H."/>
            <person name="Tanase T.-O."/>
            <person name="Nomura Y."/>
            <person name="Togiya S."/>
            <person name="Komai F."/>
            <person name="Hara R."/>
            <person name="Takeuchi K."/>
            <person name="Arita M."/>
            <person name="Imose N."/>
            <person name="Musashino K."/>
            <person name="Yuuki H."/>
            <person name="Oshima A."/>
            <person name="Sasaki N."/>
            <person name="Aotsuka S."/>
            <person name="Yoshikawa Y."/>
            <person name="Matsunawa H."/>
            <person name="Ichihara T."/>
            <person name="Shiohata N."/>
            <person name="Sano S."/>
            <person name="Moriya S."/>
            <person name="Momiyama H."/>
            <person name="Satoh N."/>
            <person name="Takami S."/>
            <person name="Terashima Y."/>
            <person name="Suzuki O."/>
            <person name="Nakagawa S."/>
            <person name="Senoh A."/>
            <person name="Mizoguchi H."/>
            <person name="Goto Y."/>
            <person name="Shimizu F."/>
            <person name="Wakebe H."/>
            <person name="Hishigaki H."/>
            <person name="Watanabe T."/>
            <person name="Sugiyama A."/>
            <person name="Takemoto M."/>
            <person name="Kawakami B."/>
            <person name="Yamazaki M."/>
            <person name="Watanabe K."/>
            <person name="Kumagai A."/>
            <person name="Itakura S."/>
            <person name="Fukuzumi Y."/>
            <person name="Fujimori Y."/>
            <person name="Komiyama M."/>
            <person name="Tashiro H."/>
            <person name="Tanigami A."/>
            <person name="Fujiwara T."/>
            <person name="Ono T."/>
            <person name="Yamada K."/>
            <person name="Fujii Y."/>
            <person name="Ozaki K."/>
            <person name="Hirao M."/>
            <person name="Ohmori Y."/>
            <person name="Kawabata A."/>
            <person name="Hikiji T."/>
            <person name="Kobatake N."/>
            <person name="Inagaki H."/>
            <person name="Ikema Y."/>
            <person name="Okamoto S."/>
            <person name="Okitani R."/>
            <person name="Kawakami T."/>
            <person name="Noguchi S."/>
            <person name="Itoh T."/>
            <person name="Shigeta K."/>
            <person name="Senba T."/>
            <person name="Matsumura K."/>
            <person name="Nakajima Y."/>
            <person name="Mizuno T."/>
            <person name="Morinaga M."/>
            <person name="Sasaki M."/>
            <person name="Togashi T."/>
            <person name="Oyama M."/>
            <person name="Hata H."/>
            <person name="Watanabe M."/>
            <person name="Komatsu T."/>
            <person name="Mizushima-Sugano J."/>
            <person name="Satoh T."/>
            <person name="Shirai Y."/>
            <person name="Takahashi Y."/>
            <person name="Nakagawa K."/>
            <person name="Okumura K."/>
            <person name="Nagase T."/>
            <person name="Nomura N."/>
            <person name="Kikuchi H."/>
            <person name="Masuho Y."/>
            <person name="Yamashita R."/>
            <person name="Nakai K."/>
            <person name="Yada T."/>
            <person name="Nakamura Y."/>
            <person name="Ohara O."/>
            <person name="Isogai T."/>
            <person name="Sugano S."/>
        </authorList>
    </citation>
    <scope>NUCLEOTIDE SEQUENCE [LARGE SCALE MRNA] (ISOFORMS 1 AND 2)</scope>
    <scope>VARIANT ILE-266</scope>
    <source>
        <tissue>Retinoblastoma</tissue>
        <tissue>Testis</tissue>
    </source>
</reference>
<reference key="2">
    <citation type="journal article" date="2003" name="Nature">
        <title>The DNA sequence of human chromosome 7.</title>
        <authorList>
            <person name="Hillier L.W."/>
            <person name="Fulton R.S."/>
            <person name="Fulton L.A."/>
            <person name="Graves T.A."/>
            <person name="Pepin K.H."/>
            <person name="Wagner-McPherson C."/>
            <person name="Layman D."/>
            <person name="Maas J."/>
            <person name="Jaeger S."/>
            <person name="Walker R."/>
            <person name="Wylie K."/>
            <person name="Sekhon M."/>
            <person name="Becker M.C."/>
            <person name="O'Laughlin M.D."/>
            <person name="Schaller M.E."/>
            <person name="Fewell G.A."/>
            <person name="Delehaunty K.D."/>
            <person name="Miner T.L."/>
            <person name="Nash W.E."/>
            <person name="Cordes M."/>
            <person name="Du H."/>
            <person name="Sun H."/>
            <person name="Edwards J."/>
            <person name="Bradshaw-Cordum H."/>
            <person name="Ali J."/>
            <person name="Andrews S."/>
            <person name="Isak A."/>
            <person name="Vanbrunt A."/>
            <person name="Nguyen C."/>
            <person name="Du F."/>
            <person name="Lamar B."/>
            <person name="Courtney L."/>
            <person name="Kalicki J."/>
            <person name="Ozersky P."/>
            <person name="Bielicki L."/>
            <person name="Scott K."/>
            <person name="Holmes A."/>
            <person name="Harkins R."/>
            <person name="Harris A."/>
            <person name="Strong C.M."/>
            <person name="Hou S."/>
            <person name="Tomlinson C."/>
            <person name="Dauphin-Kohlberg S."/>
            <person name="Kozlowicz-Reilly A."/>
            <person name="Leonard S."/>
            <person name="Rohlfing T."/>
            <person name="Rock S.M."/>
            <person name="Tin-Wollam A.-M."/>
            <person name="Abbott A."/>
            <person name="Minx P."/>
            <person name="Maupin R."/>
            <person name="Strowmatt C."/>
            <person name="Latreille P."/>
            <person name="Miller N."/>
            <person name="Johnson D."/>
            <person name="Murray J."/>
            <person name="Woessner J.P."/>
            <person name="Wendl M.C."/>
            <person name="Yang S.-P."/>
            <person name="Schultz B.R."/>
            <person name="Wallis J.W."/>
            <person name="Spieth J."/>
            <person name="Bieri T.A."/>
            <person name="Nelson J.O."/>
            <person name="Berkowicz N."/>
            <person name="Wohldmann P.E."/>
            <person name="Cook L.L."/>
            <person name="Hickenbotham M.T."/>
            <person name="Eldred J."/>
            <person name="Williams D."/>
            <person name="Bedell J.A."/>
            <person name="Mardis E.R."/>
            <person name="Clifton S.W."/>
            <person name="Chissoe S.L."/>
            <person name="Marra M.A."/>
            <person name="Raymond C."/>
            <person name="Haugen E."/>
            <person name="Gillett W."/>
            <person name="Zhou Y."/>
            <person name="James R."/>
            <person name="Phelps K."/>
            <person name="Iadanoto S."/>
            <person name="Bubb K."/>
            <person name="Simms E."/>
            <person name="Levy R."/>
            <person name="Clendenning J."/>
            <person name="Kaul R."/>
            <person name="Kent W.J."/>
            <person name="Furey T.S."/>
            <person name="Baertsch R.A."/>
            <person name="Brent M.R."/>
            <person name="Keibler E."/>
            <person name="Flicek P."/>
            <person name="Bork P."/>
            <person name="Suyama M."/>
            <person name="Bailey J.A."/>
            <person name="Portnoy M.E."/>
            <person name="Torrents D."/>
            <person name="Chinwalla A.T."/>
            <person name="Gish W.R."/>
            <person name="Eddy S.R."/>
            <person name="McPherson J.D."/>
            <person name="Olson M.V."/>
            <person name="Eichler E.E."/>
            <person name="Green E.D."/>
            <person name="Waterston R.H."/>
            <person name="Wilson R.K."/>
        </authorList>
    </citation>
    <scope>NUCLEOTIDE SEQUENCE [LARGE SCALE GENOMIC DNA]</scope>
</reference>
<reference key="3">
    <citation type="journal article" date="2004" name="Genome Res.">
        <title>The status, quality, and expansion of the NIH full-length cDNA project: the Mammalian Gene Collection (MGC).</title>
        <authorList>
            <consortium name="The MGC Project Team"/>
        </authorList>
    </citation>
    <scope>NUCLEOTIDE SEQUENCE [LARGE SCALE MRNA] (ISOFORM 2)</scope>
    <scope>NUCLEOTIDE SEQUENCE [LARGE SCALE MRNA] OF 2-378 (ISOFORM 1)</scope>
    <scope>VARIANTS ILE-68 AND ILE-266</scope>
    <source>
        <tissue>Eye</tissue>
    </source>
</reference>
<reference key="4">
    <citation type="journal article" date="2008" name="Proc. Natl. Acad. Sci. U.S.A.">
        <title>A quantitative atlas of mitotic phosphorylation.</title>
        <authorList>
            <person name="Dephoure N."/>
            <person name="Zhou C."/>
            <person name="Villen J."/>
            <person name="Beausoleil S.A."/>
            <person name="Bakalarski C.E."/>
            <person name="Elledge S.J."/>
            <person name="Gygi S.P."/>
        </authorList>
    </citation>
    <scope>PHOSPHORYLATION [LARGE SCALE ANALYSIS] AT THR-154</scope>
    <scope>IDENTIFICATION BY MASS SPECTROMETRY [LARGE SCALE ANALYSIS]</scope>
    <source>
        <tissue>Cervix carcinoma</tissue>
    </source>
</reference>
<reference key="5">
    <citation type="journal article" date="2009" name="Anal. Chem.">
        <title>Lys-N and trypsin cover complementary parts of the phosphoproteome in a refined SCX-based approach.</title>
        <authorList>
            <person name="Gauci S."/>
            <person name="Helbig A.O."/>
            <person name="Slijper M."/>
            <person name="Krijgsveld J."/>
            <person name="Heck A.J."/>
            <person name="Mohammed S."/>
        </authorList>
    </citation>
    <scope>ACETYLATION [LARGE SCALE ANALYSIS] AT ALA-2</scope>
    <scope>CLEAVAGE OF INITIATOR METHIONINE [LARGE SCALE ANALYSIS]</scope>
    <scope>IDENTIFICATION BY MASS SPECTROMETRY [LARGE SCALE ANALYSIS]</scope>
</reference>
<reference key="6">
    <citation type="journal article" date="2009" name="Sci. Signal.">
        <title>Quantitative phosphoproteomic analysis of T cell receptor signaling reveals system-wide modulation of protein-protein interactions.</title>
        <authorList>
            <person name="Mayya V."/>
            <person name="Lundgren D.H."/>
            <person name="Hwang S.-I."/>
            <person name="Rezaul K."/>
            <person name="Wu L."/>
            <person name="Eng J.K."/>
            <person name="Rodionov V."/>
            <person name="Han D.K."/>
        </authorList>
    </citation>
    <scope>PHOSPHORYLATION [LARGE SCALE ANALYSIS] AT THR-154</scope>
    <scope>IDENTIFICATION BY MASS SPECTROMETRY [LARGE SCALE ANALYSIS]</scope>
    <source>
        <tissue>Leukemic T-cell</tissue>
    </source>
</reference>
<reference key="7">
    <citation type="journal article" date="2010" name="Sci. Signal.">
        <title>Quantitative phosphoproteomics reveals widespread full phosphorylation site occupancy during mitosis.</title>
        <authorList>
            <person name="Olsen J.V."/>
            <person name="Vermeulen M."/>
            <person name="Santamaria A."/>
            <person name="Kumar C."/>
            <person name="Miller M.L."/>
            <person name="Jensen L.J."/>
            <person name="Gnad F."/>
            <person name="Cox J."/>
            <person name="Jensen T.S."/>
            <person name="Nigg E.A."/>
            <person name="Brunak S."/>
            <person name="Mann M."/>
        </authorList>
    </citation>
    <scope>PHOSPHORYLATION [LARGE SCALE ANALYSIS] AT THR-154</scope>
    <scope>IDENTIFICATION BY MASS SPECTROMETRY [LARGE SCALE ANALYSIS]</scope>
    <source>
        <tissue>Cervix carcinoma</tissue>
    </source>
</reference>
<reference key="8">
    <citation type="journal article" date="2011" name="BMC Syst. Biol.">
        <title>Initial characterization of the human central proteome.</title>
        <authorList>
            <person name="Burkard T.R."/>
            <person name="Planyavsky M."/>
            <person name="Kaupe I."/>
            <person name="Breitwieser F.P."/>
            <person name="Buerckstuemmer T."/>
            <person name="Bennett K.L."/>
            <person name="Superti-Furga G."/>
            <person name="Colinge J."/>
        </authorList>
    </citation>
    <scope>IDENTIFICATION BY MASS SPECTROMETRY [LARGE SCALE ANALYSIS]</scope>
</reference>
<reference key="9">
    <citation type="journal article" date="2011" name="RNA">
        <title>Actin-binding protein ABP140 is a methyltransferase for 3-methylcytidine at position 32 of tRNAs in Saccharomyces cerevisiae.</title>
        <authorList>
            <person name="Noma A."/>
            <person name="Yi S."/>
            <person name="Katoh T."/>
            <person name="Takai Y."/>
            <person name="Suzuki T."/>
            <person name="Suzuki T."/>
        </authorList>
    </citation>
    <scope>FUNCTION</scope>
</reference>
<reference key="10">
    <citation type="journal article" date="2012" name="Proc. Natl. Acad. Sci. U.S.A.">
        <title>N-terminal acetylome analyses and functional insights of the N-terminal acetyltransferase NatB.</title>
        <authorList>
            <person name="Van Damme P."/>
            <person name="Lasa M."/>
            <person name="Polevoda B."/>
            <person name="Gazquez C."/>
            <person name="Elosegui-Artola A."/>
            <person name="Kim D.S."/>
            <person name="De Juan-Pardo E."/>
            <person name="Demeyer K."/>
            <person name="Hole K."/>
            <person name="Larrea E."/>
            <person name="Timmerman E."/>
            <person name="Prieto J."/>
            <person name="Arnesen T."/>
            <person name="Sherman F."/>
            <person name="Gevaert K."/>
            <person name="Aldabe R."/>
        </authorList>
    </citation>
    <scope>ACETYLATION [LARGE SCALE ANALYSIS] AT ALA-2</scope>
    <scope>CLEAVAGE OF INITIATOR METHIONINE [LARGE SCALE ANALYSIS]</scope>
    <scope>IDENTIFICATION BY MASS SPECTROMETRY [LARGE SCALE ANALYSIS]</scope>
</reference>
<reference key="11">
    <citation type="journal article" date="2013" name="J. Proteome Res.">
        <title>Toward a comprehensive characterization of a human cancer cell phosphoproteome.</title>
        <authorList>
            <person name="Zhou H."/>
            <person name="Di Palma S."/>
            <person name="Preisinger C."/>
            <person name="Peng M."/>
            <person name="Polat A.N."/>
            <person name="Heck A.J."/>
            <person name="Mohammed S."/>
        </authorList>
    </citation>
    <scope>PHOSPHORYLATION [LARGE SCALE ANALYSIS] AT SER-4 AND THR-154</scope>
    <scope>IDENTIFICATION BY MASS SPECTROMETRY [LARGE SCALE ANALYSIS]</scope>
    <source>
        <tissue>Cervix carcinoma</tissue>
        <tissue>Erythroleukemia</tissue>
    </source>
</reference>
<reference key="12">
    <citation type="journal article" date="2017" name="J. Biol. Chem.">
        <title>Three distinct 3-methylcytidine (m3C) methyltransferases modify tRNA and mRNA in mice and humans.</title>
        <authorList>
            <person name="Xu L."/>
            <person name="Liu X."/>
            <person name="Sheng N."/>
            <person name="Oo K.S."/>
            <person name="Liang J."/>
            <person name="Chionh Y.H."/>
            <person name="Xu J."/>
            <person name="Ye F."/>
            <person name="Gao Y.G."/>
            <person name="Dedon P.C."/>
            <person name="Fu X.Y."/>
        </authorList>
    </citation>
    <scope>FUNCTION</scope>
    <scope>CATALYTIC ACTIVITY</scope>
</reference>
<reference key="13">
    <citation type="journal article" date="2020" name="Nat. Commun.">
        <title>DALRD3 encodes a protein mutated in epileptic encephalopathy that targets arginine tRNAs for 3-methylcytosine modification.</title>
        <authorList>
            <person name="Lentini J.M."/>
            <person name="Alsaif H.S."/>
            <person name="Faqeih E."/>
            <person name="Alkuraya F.S."/>
            <person name="Fu D."/>
        </authorList>
    </citation>
    <scope>INTERACTION WITH DALRD3</scope>
</reference>
<reference key="14">
    <citation type="journal article" date="2021" name="Nucleic Acids Res.">
        <title>Mutually exclusive substrate selection strategy by human m3C RNA transferases METTL2A and METTL6.</title>
        <authorList>
            <person name="Mao X.L."/>
            <person name="Li Z.H."/>
            <person name="Huang M.H."/>
            <person name="Wang J.T."/>
            <person name="Zhou J.B."/>
            <person name="Li Q.R."/>
            <person name="Xu H."/>
            <person name="Wang X.J."/>
            <person name="Zhou X.L."/>
        </authorList>
    </citation>
    <scope>SUBCELLULAR LOCATION</scope>
</reference>
<name>MET2B_HUMAN</name>
<feature type="initiator methionine" description="Removed" evidence="15 18">
    <location>
        <position position="1"/>
    </location>
</feature>
<feature type="chain" id="PRO_0000328847" description="tRNA N(3)-cytidine methyltransferase METTL2B">
    <location>
        <begin position="2"/>
        <end position="378"/>
    </location>
</feature>
<feature type="binding site" evidence="1">
    <location>
        <position position="78"/>
    </location>
    <ligand>
        <name>S-adenosyl-L-methionine</name>
        <dbReference type="ChEBI" id="CHEBI:59789"/>
    </ligand>
</feature>
<feature type="binding site" evidence="1">
    <location>
        <position position="82"/>
    </location>
    <ligand>
        <name>S-adenosyl-L-methionine</name>
        <dbReference type="ChEBI" id="CHEBI:59789"/>
    </ligand>
</feature>
<feature type="binding site" evidence="1">
    <location>
        <position position="188"/>
    </location>
    <ligand>
        <name>S-adenosyl-L-methionine</name>
        <dbReference type="ChEBI" id="CHEBI:59789"/>
    </ligand>
</feature>
<feature type="binding site" evidence="1">
    <location>
        <position position="213"/>
    </location>
    <ligand>
        <name>S-adenosyl-L-methionine</name>
        <dbReference type="ChEBI" id="CHEBI:59789"/>
    </ligand>
</feature>
<feature type="binding site" evidence="1">
    <location>
        <position position="239"/>
    </location>
    <ligand>
        <name>S-adenosyl-L-methionine</name>
        <dbReference type="ChEBI" id="CHEBI:59789"/>
    </ligand>
</feature>
<feature type="binding site" evidence="1">
    <location>
        <position position="240"/>
    </location>
    <ligand>
        <name>S-adenosyl-L-methionine</name>
        <dbReference type="ChEBI" id="CHEBI:59789"/>
    </ligand>
</feature>
<feature type="binding site" evidence="1">
    <location>
        <position position="260"/>
    </location>
    <ligand>
        <name>S-adenosyl-L-methionine</name>
        <dbReference type="ChEBI" id="CHEBI:59789"/>
    </ligand>
</feature>
<feature type="modified residue" description="N-acetylalanine" evidence="15 18">
    <location>
        <position position="2"/>
    </location>
</feature>
<feature type="modified residue" description="Phosphoserine" evidence="19">
    <location>
        <position position="4"/>
    </location>
</feature>
<feature type="modified residue" description="Phosphothreonine" evidence="14 16 17 19">
    <location>
        <position position="154"/>
    </location>
</feature>
<feature type="splice variant" id="VSP_032816" description="In isoform 2." evidence="8 9">
    <original>MAGSYPEGAPAILADKRQQFGSRFLSDPARVFHHNAWDNVEWSEEQAAAAERKVQENSIQRVCQEKQ</original>
    <variation>MP</variation>
    <location>
        <begin position="1"/>
        <end position="67"/>
    </location>
</feature>
<feature type="sequence variant" id="VAR_059465" description="In dbSNP:rs2288557." evidence="4">
    <original>V</original>
    <variation>I</variation>
    <location>
        <position position="68"/>
    </location>
</feature>
<feature type="sequence variant" id="VAR_042547" description="In dbSNP:rs2896399.">
    <original>C</original>
    <variation>R</variation>
    <location>
        <position position="124"/>
    </location>
</feature>
<feature type="sequence variant" id="VAR_042548" description="In dbSNP:rs2023329.">
    <original>N</original>
    <variation>H</variation>
    <location>
        <position position="129"/>
    </location>
</feature>
<feature type="sequence variant" id="VAR_042549" description="In dbSNP:rs1065267.">
    <original>E</original>
    <variation>K</variation>
    <location>
        <position position="169"/>
    </location>
</feature>
<feature type="sequence variant" id="VAR_042550" description="In dbSNP:rs2562741." evidence="3 4">
    <original>V</original>
    <variation>I</variation>
    <location>
        <position position="266"/>
    </location>
</feature>
<proteinExistence type="evidence at protein level"/>
<sequence>MAGSYPEGAPAILADKRQQFGSRFLSDPARVFHHNAWDNVEWSEEQAAAAERKVQENSIQRVCQEKQVDYEINAHKYWNDFYKIHENGFFKDRHWLFTEFPELAPSQNQNHLKDWFLENKSEVCECRNNEDGPGLIMEEQHKCSSKSLEHKTQTPPVEENVTQKISDLEICADEFPGSSATYRILEVGCGVGNTVFPILQTNNDPGLFVYCCDFSSTAIELVQTNSEYDPSRCFAFVHDLCDEEKSYPVPKGSLDIIILIFVLSAVVPDKMQKAINRLSRLLKPGGMVLLRDYGRYDMAQLRFKKGQCLSGNFYVRGDGTRVYFFTQEELDTLFTTAGLEKVQNLVDRRLQVNRGKQLTMYRVWIQCKYCKPLLSSTS</sequence>
<protein>
    <recommendedName>
        <fullName evidence="11">tRNA N(3)-cytidine methyltransferase METTL2B</fullName>
        <ecNumber evidence="12">2.1.1.-</ecNumber>
    </recommendedName>
    <alternativeName>
        <fullName evidence="11">Methyltransferase-like protein 2B</fullName>
    </alternativeName>
</protein>
<evidence type="ECO:0000250" key="1">
    <source>
        <dbReference type="UniProtKB" id="Q8TCB7"/>
    </source>
</evidence>
<evidence type="ECO:0000250" key="2">
    <source>
        <dbReference type="UniProtKB" id="Q96IZ6"/>
    </source>
</evidence>
<evidence type="ECO:0000269" key="3">
    <source>
    </source>
</evidence>
<evidence type="ECO:0000269" key="4">
    <source>
    </source>
</evidence>
<evidence type="ECO:0000269" key="5">
    <source>
    </source>
</evidence>
<evidence type="ECO:0000269" key="6">
    <source>
    </source>
</evidence>
<evidence type="ECO:0000269" key="7">
    <source>
    </source>
</evidence>
<evidence type="ECO:0000303" key="8">
    <source>
    </source>
</evidence>
<evidence type="ECO:0000303" key="9">
    <source>
    </source>
</evidence>
<evidence type="ECO:0000303" key="10">
    <source>
    </source>
</evidence>
<evidence type="ECO:0000305" key="11"/>
<evidence type="ECO:0000305" key="12">
    <source>
    </source>
</evidence>
<evidence type="ECO:0000312" key="13">
    <source>
        <dbReference type="HGNC" id="HGNC:18272"/>
    </source>
</evidence>
<evidence type="ECO:0007744" key="14">
    <source>
    </source>
</evidence>
<evidence type="ECO:0007744" key="15">
    <source>
    </source>
</evidence>
<evidence type="ECO:0007744" key="16">
    <source>
    </source>
</evidence>
<evidence type="ECO:0007744" key="17">
    <source>
    </source>
</evidence>
<evidence type="ECO:0007744" key="18">
    <source>
    </source>
</evidence>
<evidence type="ECO:0007744" key="19">
    <source>
    </source>
</evidence>
<accession>Q6P1Q9</accession>
<accession>B4DZ68</accession>
<accession>Q0IJ54</accession>
<accession>Q3B7J1</accession>